<protein>
    <recommendedName>
        <fullName evidence="1">Glutamyl-tRNA(Gln) amidotransferase subunit A</fullName>
        <shortName evidence="1">Glu-ADT subunit A</shortName>
        <ecNumber evidence="1">6.3.5.7</ecNumber>
    </recommendedName>
</protein>
<evidence type="ECO:0000255" key="1">
    <source>
        <dbReference type="HAMAP-Rule" id="MF_00120"/>
    </source>
</evidence>
<keyword id="KW-0067">ATP-binding</keyword>
<keyword id="KW-0436">Ligase</keyword>
<keyword id="KW-0547">Nucleotide-binding</keyword>
<keyword id="KW-0648">Protein biosynthesis</keyword>
<organism>
    <name type="scientific">Azotobacter vinelandii (strain DJ / ATCC BAA-1303)</name>
    <dbReference type="NCBI Taxonomy" id="322710"/>
    <lineage>
        <taxon>Bacteria</taxon>
        <taxon>Pseudomonadati</taxon>
        <taxon>Pseudomonadota</taxon>
        <taxon>Gammaproteobacteria</taxon>
        <taxon>Pseudomonadales</taxon>
        <taxon>Pseudomonadaceae</taxon>
        <taxon>Azotobacter</taxon>
    </lineage>
</organism>
<dbReference type="EC" id="6.3.5.7" evidence="1"/>
<dbReference type="EMBL" id="CP001157">
    <property type="protein sequence ID" value="ACO77489.1"/>
    <property type="molecule type" value="Genomic_DNA"/>
</dbReference>
<dbReference type="RefSeq" id="WP_012699909.1">
    <property type="nucleotide sequence ID" value="NC_012560.1"/>
</dbReference>
<dbReference type="SMR" id="C1DQ37"/>
<dbReference type="STRING" id="322710.Avin_12630"/>
<dbReference type="EnsemblBacteria" id="ACO77489">
    <property type="protein sequence ID" value="ACO77489"/>
    <property type="gene ID" value="Avin_12630"/>
</dbReference>
<dbReference type="GeneID" id="88184579"/>
<dbReference type="KEGG" id="avn:Avin_12630"/>
<dbReference type="eggNOG" id="COG0154">
    <property type="taxonomic scope" value="Bacteria"/>
</dbReference>
<dbReference type="HOGENOM" id="CLU_009600_0_3_6"/>
<dbReference type="OrthoDB" id="9811471at2"/>
<dbReference type="Proteomes" id="UP000002424">
    <property type="component" value="Chromosome"/>
</dbReference>
<dbReference type="GO" id="GO:0030956">
    <property type="term" value="C:glutamyl-tRNA(Gln) amidotransferase complex"/>
    <property type="evidence" value="ECO:0007669"/>
    <property type="project" value="InterPro"/>
</dbReference>
<dbReference type="GO" id="GO:0005524">
    <property type="term" value="F:ATP binding"/>
    <property type="evidence" value="ECO:0007669"/>
    <property type="project" value="UniProtKB-KW"/>
</dbReference>
<dbReference type="GO" id="GO:0050567">
    <property type="term" value="F:glutaminyl-tRNA synthase (glutamine-hydrolyzing) activity"/>
    <property type="evidence" value="ECO:0007669"/>
    <property type="project" value="UniProtKB-UniRule"/>
</dbReference>
<dbReference type="GO" id="GO:0006412">
    <property type="term" value="P:translation"/>
    <property type="evidence" value="ECO:0007669"/>
    <property type="project" value="UniProtKB-UniRule"/>
</dbReference>
<dbReference type="Gene3D" id="3.90.1300.10">
    <property type="entry name" value="Amidase signature (AS) domain"/>
    <property type="match status" value="1"/>
</dbReference>
<dbReference type="HAMAP" id="MF_00120">
    <property type="entry name" value="GatA"/>
    <property type="match status" value="1"/>
</dbReference>
<dbReference type="InterPro" id="IPR000120">
    <property type="entry name" value="Amidase"/>
</dbReference>
<dbReference type="InterPro" id="IPR020556">
    <property type="entry name" value="Amidase_CS"/>
</dbReference>
<dbReference type="InterPro" id="IPR023631">
    <property type="entry name" value="Amidase_dom"/>
</dbReference>
<dbReference type="InterPro" id="IPR036928">
    <property type="entry name" value="AS_sf"/>
</dbReference>
<dbReference type="InterPro" id="IPR004412">
    <property type="entry name" value="GatA"/>
</dbReference>
<dbReference type="NCBIfam" id="TIGR00132">
    <property type="entry name" value="gatA"/>
    <property type="match status" value="1"/>
</dbReference>
<dbReference type="PANTHER" id="PTHR11895:SF151">
    <property type="entry name" value="GLUTAMYL-TRNA(GLN) AMIDOTRANSFERASE SUBUNIT A"/>
    <property type="match status" value="1"/>
</dbReference>
<dbReference type="PANTHER" id="PTHR11895">
    <property type="entry name" value="TRANSAMIDASE"/>
    <property type="match status" value="1"/>
</dbReference>
<dbReference type="Pfam" id="PF01425">
    <property type="entry name" value="Amidase"/>
    <property type="match status" value="1"/>
</dbReference>
<dbReference type="SUPFAM" id="SSF75304">
    <property type="entry name" value="Amidase signature (AS) enzymes"/>
    <property type="match status" value="1"/>
</dbReference>
<dbReference type="PROSITE" id="PS00571">
    <property type="entry name" value="AMIDASES"/>
    <property type="match status" value="1"/>
</dbReference>
<sequence>MHRLTLAQIARGLAAKEFSSVELSEALLARIAELDPGLNSFITVTAEQALEQARAADARRAAGESGALLGAPIAHKDLFCTKGVRTSCASKILDDFIAPYDATVVERLAAAGCVSLGKLNMDEFAMGSASESSHYGPVRNPWNTECVPGGSSGGSAAAVAARLVPAATGSDTGGSIRQPAALTNLTGLKPTYGRVSRWGMIAYASSLDQGGPLARSAEDCALLLSAMAGFDPKDSTCVDQPVDDYLAALHRPLAGLRIGLPREYFGAGLDPRLSDAVMACVEELKKLGATVKEIGLPSMQHAIPAYYVIAPAEASSNLSRFDGVRFGYRCENPQSLEDLYKRSRGEGFGAEVKRRIMVGTYALSAGYYDAYYLKAQKIRRLIRSDFIGAFQEVDLILGPTTPNPAWKLGEKGDDPVAAYLEDIYTITANLAGIPGLSMPAGFVDGLPVGVQLLAPYFQESRLLNVAHQYQQATDWHQRAPEGY</sequence>
<feature type="chain" id="PRO_1000203024" description="Glutamyl-tRNA(Gln) amidotransferase subunit A">
    <location>
        <begin position="1"/>
        <end position="483"/>
    </location>
</feature>
<feature type="active site" description="Charge relay system" evidence="1">
    <location>
        <position position="76"/>
    </location>
</feature>
<feature type="active site" description="Charge relay system" evidence="1">
    <location>
        <position position="151"/>
    </location>
</feature>
<feature type="active site" description="Acyl-ester intermediate" evidence="1">
    <location>
        <position position="175"/>
    </location>
</feature>
<comment type="function">
    <text evidence="1">Allows the formation of correctly charged Gln-tRNA(Gln) through the transamidation of misacylated Glu-tRNA(Gln) in organisms which lack glutaminyl-tRNA synthetase. The reaction takes place in the presence of glutamine and ATP through an activated gamma-phospho-Glu-tRNA(Gln).</text>
</comment>
<comment type="catalytic activity">
    <reaction evidence="1">
        <text>L-glutamyl-tRNA(Gln) + L-glutamine + ATP + H2O = L-glutaminyl-tRNA(Gln) + L-glutamate + ADP + phosphate + H(+)</text>
        <dbReference type="Rhea" id="RHEA:17521"/>
        <dbReference type="Rhea" id="RHEA-COMP:9681"/>
        <dbReference type="Rhea" id="RHEA-COMP:9684"/>
        <dbReference type="ChEBI" id="CHEBI:15377"/>
        <dbReference type="ChEBI" id="CHEBI:15378"/>
        <dbReference type="ChEBI" id="CHEBI:29985"/>
        <dbReference type="ChEBI" id="CHEBI:30616"/>
        <dbReference type="ChEBI" id="CHEBI:43474"/>
        <dbReference type="ChEBI" id="CHEBI:58359"/>
        <dbReference type="ChEBI" id="CHEBI:78520"/>
        <dbReference type="ChEBI" id="CHEBI:78521"/>
        <dbReference type="ChEBI" id="CHEBI:456216"/>
        <dbReference type="EC" id="6.3.5.7"/>
    </reaction>
</comment>
<comment type="subunit">
    <text evidence="1">Heterotrimer of A, B and C subunits.</text>
</comment>
<comment type="similarity">
    <text evidence="1">Belongs to the amidase family. GatA subfamily.</text>
</comment>
<reference key="1">
    <citation type="journal article" date="2009" name="J. Bacteriol.">
        <title>Genome sequence of Azotobacter vinelandii, an obligate aerobe specialized to support diverse anaerobic metabolic processes.</title>
        <authorList>
            <person name="Setubal J.C."/>
            <person name="Dos Santos P."/>
            <person name="Goldman B.S."/>
            <person name="Ertesvaag H."/>
            <person name="Espin G."/>
            <person name="Rubio L.M."/>
            <person name="Valla S."/>
            <person name="Almeida N.F."/>
            <person name="Balasubramanian D."/>
            <person name="Cromes L."/>
            <person name="Curatti L."/>
            <person name="Du Z."/>
            <person name="Godsy E."/>
            <person name="Goodner B."/>
            <person name="Hellner-Burris K."/>
            <person name="Hernandez J.A."/>
            <person name="Houmiel K."/>
            <person name="Imperial J."/>
            <person name="Kennedy C."/>
            <person name="Larson T.J."/>
            <person name="Latreille P."/>
            <person name="Ligon L.S."/>
            <person name="Lu J."/>
            <person name="Maerk M."/>
            <person name="Miller N.M."/>
            <person name="Norton S."/>
            <person name="O'Carroll I.P."/>
            <person name="Paulsen I."/>
            <person name="Raulfs E.C."/>
            <person name="Roemer R."/>
            <person name="Rosser J."/>
            <person name="Segura D."/>
            <person name="Slater S."/>
            <person name="Stricklin S.L."/>
            <person name="Studholme D.J."/>
            <person name="Sun J."/>
            <person name="Viana C.J."/>
            <person name="Wallin E."/>
            <person name="Wang B."/>
            <person name="Wheeler C."/>
            <person name="Zhu H."/>
            <person name="Dean D.R."/>
            <person name="Dixon R."/>
            <person name="Wood D."/>
        </authorList>
    </citation>
    <scope>NUCLEOTIDE SEQUENCE [LARGE SCALE GENOMIC DNA]</scope>
    <source>
        <strain>DJ / ATCC BAA-1303</strain>
    </source>
</reference>
<accession>C1DQ37</accession>
<name>GATA_AZOVD</name>
<proteinExistence type="inferred from homology"/>
<gene>
    <name evidence="1" type="primary">gatA</name>
    <name type="ordered locus">Avin_12630</name>
</gene>